<gene>
    <name evidence="1" type="primary">ndhI</name>
</gene>
<evidence type="ECO:0000255" key="1">
    <source>
        <dbReference type="HAMAP-Rule" id="MF_01351"/>
    </source>
</evidence>
<name>NDHI_EUTPA</name>
<dbReference type="EC" id="7.1.1.-" evidence="1"/>
<dbReference type="EMBL" id="AF383788">
    <property type="protein sequence ID" value="AAN61729.1"/>
    <property type="molecule type" value="Genomic_DNA"/>
</dbReference>
<dbReference type="RefSeq" id="YP_010923965.1">
    <property type="nucleotide sequence ID" value="NC_081939.1"/>
</dbReference>
<dbReference type="SMR" id="Q8HVS5"/>
<dbReference type="GeneID" id="84335151"/>
<dbReference type="GO" id="GO:0009535">
    <property type="term" value="C:chloroplast thylakoid membrane"/>
    <property type="evidence" value="ECO:0007669"/>
    <property type="project" value="UniProtKB-SubCell"/>
</dbReference>
<dbReference type="GO" id="GO:0051539">
    <property type="term" value="F:4 iron, 4 sulfur cluster binding"/>
    <property type="evidence" value="ECO:0007669"/>
    <property type="project" value="UniProtKB-KW"/>
</dbReference>
<dbReference type="GO" id="GO:0005506">
    <property type="term" value="F:iron ion binding"/>
    <property type="evidence" value="ECO:0007669"/>
    <property type="project" value="UniProtKB-UniRule"/>
</dbReference>
<dbReference type="GO" id="GO:0008137">
    <property type="term" value="F:NADH dehydrogenase (ubiquinone) activity"/>
    <property type="evidence" value="ECO:0007669"/>
    <property type="project" value="InterPro"/>
</dbReference>
<dbReference type="GO" id="GO:0048038">
    <property type="term" value="F:quinone binding"/>
    <property type="evidence" value="ECO:0007669"/>
    <property type="project" value="UniProtKB-KW"/>
</dbReference>
<dbReference type="GO" id="GO:0019684">
    <property type="term" value="P:photosynthesis, light reaction"/>
    <property type="evidence" value="ECO:0007669"/>
    <property type="project" value="UniProtKB-UniRule"/>
</dbReference>
<dbReference type="FunFam" id="3.30.70.3270:FF:000006">
    <property type="entry name" value="NAD(P)H-quinone oxidoreductase subunit I, chloroplastic"/>
    <property type="match status" value="1"/>
</dbReference>
<dbReference type="Gene3D" id="3.30.70.3270">
    <property type="match status" value="1"/>
</dbReference>
<dbReference type="HAMAP" id="MF_01351">
    <property type="entry name" value="NDH1_NuoI"/>
    <property type="match status" value="1"/>
</dbReference>
<dbReference type="InterPro" id="IPR017896">
    <property type="entry name" value="4Fe4S_Fe-S-bd"/>
</dbReference>
<dbReference type="InterPro" id="IPR017900">
    <property type="entry name" value="4Fe4S_Fe_S_CS"/>
</dbReference>
<dbReference type="InterPro" id="IPR010226">
    <property type="entry name" value="NADH_quinone_OxRdtase_chainI"/>
</dbReference>
<dbReference type="InterPro" id="IPR004497">
    <property type="entry name" value="NDHI"/>
</dbReference>
<dbReference type="NCBIfam" id="TIGR00403">
    <property type="entry name" value="ndhI"/>
    <property type="match status" value="1"/>
</dbReference>
<dbReference type="NCBIfam" id="TIGR01971">
    <property type="entry name" value="NuoI"/>
    <property type="match status" value="1"/>
</dbReference>
<dbReference type="NCBIfam" id="NF004537">
    <property type="entry name" value="PRK05888.1-3"/>
    <property type="match status" value="1"/>
</dbReference>
<dbReference type="PANTHER" id="PTHR47275">
    <property type="entry name" value="NAD(P)H-QUINONE OXIDOREDUCTASE SUBUNIT I, CHLOROPLASTIC"/>
    <property type="match status" value="1"/>
</dbReference>
<dbReference type="PANTHER" id="PTHR47275:SF1">
    <property type="entry name" value="NAD(P)H-QUINONE OXIDOREDUCTASE SUBUNIT I, CHLOROPLASTIC"/>
    <property type="match status" value="1"/>
</dbReference>
<dbReference type="Pfam" id="PF00037">
    <property type="entry name" value="Fer4"/>
    <property type="match status" value="2"/>
</dbReference>
<dbReference type="SUPFAM" id="SSF54862">
    <property type="entry name" value="4Fe-4S ferredoxins"/>
    <property type="match status" value="1"/>
</dbReference>
<dbReference type="PROSITE" id="PS00198">
    <property type="entry name" value="4FE4S_FER_1"/>
    <property type="match status" value="2"/>
</dbReference>
<dbReference type="PROSITE" id="PS51379">
    <property type="entry name" value="4FE4S_FER_2"/>
    <property type="match status" value="2"/>
</dbReference>
<feature type="chain" id="PRO_0000250788" description="NAD(P)H-quinone oxidoreductase subunit I, chloroplastic">
    <location>
        <begin position="1"/>
        <end position="166"/>
    </location>
</feature>
<feature type="domain" description="4Fe-4S ferredoxin-type 1" evidence="1">
    <location>
        <begin position="55"/>
        <end position="84"/>
    </location>
</feature>
<feature type="domain" description="4Fe-4S ferredoxin-type 2" evidence="1">
    <location>
        <begin position="95"/>
        <end position="124"/>
    </location>
</feature>
<feature type="binding site" evidence="1">
    <location>
        <position position="64"/>
    </location>
    <ligand>
        <name>[4Fe-4S] cluster</name>
        <dbReference type="ChEBI" id="CHEBI:49883"/>
        <label>1</label>
    </ligand>
</feature>
<feature type="binding site" evidence="1">
    <location>
        <position position="67"/>
    </location>
    <ligand>
        <name>[4Fe-4S] cluster</name>
        <dbReference type="ChEBI" id="CHEBI:49883"/>
        <label>1</label>
    </ligand>
</feature>
<feature type="binding site" evidence="1">
    <location>
        <position position="70"/>
    </location>
    <ligand>
        <name>[4Fe-4S] cluster</name>
        <dbReference type="ChEBI" id="CHEBI:49883"/>
        <label>1</label>
    </ligand>
</feature>
<feature type="binding site" evidence="1">
    <location>
        <position position="74"/>
    </location>
    <ligand>
        <name>[4Fe-4S] cluster</name>
        <dbReference type="ChEBI" id="CHEBI:49883"/>
        <label>2</label>
    </ligand>
</feature>
<feature type="binding site" evidence="1">
    <location>
        <position position="104"/>
    </location>
    <ligand>
        <name>[4Fe-4S] cluster</name>
        <dbReference type="ChEBI" id="CHEBI:49883"/>
        <label>2</label>
    </ligand>
</feature>
<feature type="binding site" evidence="1">
    <location>
        <position position="107"/>
    </location>
    <ligand>
        <name>[4Fe-4S] cluster</name>
        <dbReference type="ChEBI" id="CHEBI:49883"/>
        <label>2</label>
    </ligand>
</feature>
<feature type="binding site" evidence="1">
    <location>
        <position position="110"/>
    </location>
    <ligand>
        <name>[4Fe-4S] cluster</name>
        <dbReference type="ChEBI" id="CHEBI:49883"/>
        <label>2</label>
    </ligand>
</feature>
<feature type="binding site" evidence="1">
    <location>
        <position position="114"/>
    </location>
    <ligand>
        <name>[4Fe-4S] cluster</name>
        <dbReference type="ChEBI" id="CHEBI:49883"/>
        <label>1</label>
    </ligand>
</feature>
<proteinExistence type="inferred from homology"/>
<protein>
    <recommendedName>
        <fullName evidence="1">NAD(P)H-quinone oxidoreductase subunit I, chloroplastic</fullName>
        <ecNumber evidence="1">7.1.1.-</ecNumber>
    </recommendedName>
    <alternativeName>
        <fullName evidence="1">NAD(P)H dehydrogenase subunit I</fullName>
        <shortName evidence="1">NDH subunit I</shortName>
    </alternativeName>
    <alternativeName>
        <fullName evidence="1">NADH-plastoquinone oxidoreductase subunit I</fullName>
    </alternativeName>
</protein>
<comment type="function">
    <text evidence="1">NDH shuttles electrons from NAD(P)H:plastoquinone, via FMN and iron-sulfur (Fe-S) centers, to quinones in the photosynthetic chain and possibly in a chloroplast respiratory chain. The immediate electron acceptor for the enzyme in this species is believed to be plastoquinone. Couples the redox reaction to proton translocation, and thus conserves the redox energy in a proton gradient.</text>
</comment>
<comment type="catalytic activity">
    <reaction evidence="1">
        <text>a plastoquinone + NADH + (n+1) H(+)(in) = a plastoquinol + NAD(+) + n H(+)(out)</text>
        <dbReference type="Rhea" id="RHEA:42608"/>
        <dbReference type="Rhea" id="RHEA-COMP:9561"/>
        <dbReference type="Rhea" id="RHEA-COMP:9562"/>
        <dbReference type="ChEBI" id="CHEBI:15378"/>
        <dbReference type="ChEBI" id="CHEBI:17757"/>
        <dbReference type="ChEBI" id="CHEBI:57540"/>
        <dbReference type="ChEBI" id="CHEBI:57945"/>
        <dbReference type="ChEBI" id="CHEBI:62192"/>
    </reaction>
</comment>
<comment type="catalytic activity">
    <reaction evidence="1">
        <text>a plastoquinone + NADPH + (n+1) H(+)(in) = a plastoquinol + NADP(+) + n H(+)(out)</text>
        <dbReference type="Rhea" id="RHEA:42612"/>
        <dbReference type="Rhea" id="RHEA-COMP:9561"/>
        <dbReference type="Rhea" id="RHEA-COMP:9562"/>
        <dbReference type="ChEBI" id="CHEBI:15378"/>
        <dbReference type="ChEBI" id="CHEBI:17757"/>
        <dbReference type="ChEBI" id="CHEBI:57783"/>
        <dbReference type="ChEBI" id="CHEBI:58349"/>
        <dbReference type="ChEBI" id="CHEBI:62192"/>
    </reaction>
</comment>
<comment type="cofactor">
    <cofactor evidence="1">
        <name>[4Fe-4S] cluster</name>
        <dbReference type="ChEBI" id="CHEBI:49883"/>
    </cofactor>
    <text evidence="1">Binds 2 [4Fe-4S] clusters per subunit.</text>
</comment>
<comment type="subunit">
    <text evidence="1">NDH is composed of at least 16 different subunits, 5 of which are encoded in the nucleus.</text>
</comment>
<comment type="subcellular location">
    <subcellularLocation>
        <location evidence="1">Plastid</location>
        <location evidence="1">Chloroplast thylakoid membrane</location>
        <topology evidence="1">Peripheral membrane protein</topology>
    </subcellularLocation>
</comment>
<comment type="similarity">
    <text evidence="1">Belongs to the complex I 23 kDa subunit family.</text>
</comment>
<sequence>MFPMVTEFMNYGQQTVRAARYIGQGFMITLSHANRLPVTIQYPYEKLITSERFRGRIHFEFDKCIACEVCVRVCPIDLPVVDWKLETDIRKKRLLNYSIDFGICIFCGNCVEYCPTNCLSMTEEYELSTYDRHELNYNQIALGRLPMSIIDDYTIRTILNLPEIKT</sequence>
<keyword id="KW-0004">4Fe-4S</keyword>
<keyword id="KW-0150">Chloroplast</keyword>
<keyword id="KW-0408">Iron</keyword>
<keyword id="KW-0411">Iron-sulfur</keyword>
<keyword id="KW-0472">Membrane</keyword>
<keyword id="KW-0479">Metal-binding</keyword>
<keyword id="KW-0520">NAD</keyword>
<keyword id="KW-0521">NADP</keyword>
<keyword id="KW-0934">Plastid</keyword>
<keyword id="KW-0618">Plastoquinone</keyword>
<keyword id="KW-0874">Quinone</keyword>
<keyword id="KW-0677">Repeat</keyword>
<keyword id="KW-0793">Thylakoid</keyword>
<keyword id="KW-1278">Translocase</keyword>
<geneLocation type="chloroplast"/>
<reference key="1">
    <citation type="submission" date="2003-01" db="EMBL/GenBank/DDBJ databases">
        <title>Chloroplast DNA phylogeny of tribe Heliantheae (Asteraceae).</title>
        <authorList>
            <person name="Panero J.L."/>
            <person name="Baldwin B.G."/>
            <person name="Schilling E.E."/>
            <person name="Clevinger J.A."/>
        </authorList>
    </citation>
    <scope>NUCLEOTIDE SEQUENCE [GENOMIC DNA]</scope>
</reference>
<organism>
    <name type="scientific">Eutetras palmeri</name>
    <dbReference type="NCBI Taxonomy" id="176532"/>
    <lineage>
        <taxon>Eukaryota</taxon>
        <taxon>Viridiplantae</taxon>
        <taxon>Streptophyta</taxon>
        <taxon>Embryophyta</taxon>
        <taxon>Tracheophyta</taxon>
        <taxon>Spermatophyta</taxon>
        <taxon>Magnoliopsida</taxon>
        <taxon>eudicotyledons</taxon>
        <taxon>Gunneridae</taxon>
        <taxon>Pentapetalae</taxon>
        <taxon>asterids</taxon>
        <taxon>campanulids</taxon>
        <taxon>Asterales</taxon>
        <taxon>Asteraceae</taxon>
        <taxon>Asteroideae</taxon>
        <taxon>Heliantheae alliance</taxon>
        <taxon>Perityleae</taxon>
        <taxon>Eutetras</taxon>
    </lineage>
</organism>
<accession>Q8HVS5</accession>